<protein>
    <recommendedName>
        <fullName evidence="1">Putative pre-16S rRNA nuclease</fullName>
        <ecNumber evidence="1">3.1.-.-</ecNumber>
    </recommendedName>
</protein>
<name>YQGF_GEOSW</name>
<reference key="1">
    <citation type="submission" date="2009-06" db="EMBL/GenBank/DDBJ databases">
        <title>Complete sequence of chromosome of Geopacillus sp. WCH70.</title>
        <authorList>
            <consortium name="US DOE Joint Genome Institute"/>
            <person name="Lucas S."/>
            <person name="Copeland A."/>
            <person name="Lapidus A."/>
            <person name="Glavina del Rio T."/>
            <person name="Dalin E."/>
            <person name="Tice H."/>
            <person name="Bruce D."/>
            <person name="Goodwin L."/>
            <person name="Pitluck S."/>
            <person name="Chertkov O."/>
            <person name="Brettin T."/>
            <person name="Detter J.C."/>
            <person name="Han C."/>
            <person name="Larimer F."/>
            <person name="Land M."/>
            <person name="Hauser L."/>
            <person name="Kyrpides N."/>
            <person name="Mikhailova N."/>
            <person name="Brumm P."/>
            <person name="Mead D.A."/>
            <person name="Richardson P."/>
        </authorList>
    </citation>
    <scope>NUCLEOTIDE SEQUENCE [LARGE SCALE GENOMIC DNA]</scope>
    <source>
        <strain>WCH70</strain>
    </source>
</reference>
<proteinExistence type="inferred from homology"/>
<sequence>MRVLGLDLGTKTLGVAVSDELGWTAQGIETISIDEERGEYGLKRLREIIDEYEVDTIVVGFPKNMNGTVGPRAEASQRFAKLLESEFSLPVILWDERLSTMAAERMLITADVSRKKRKQVIDKMAAVVILQSYLDSKQ</sequence>
<feature type="chain" id="PRO_1000212413" description="Putative pre-16S rRNA nuclease">
    <location>
        <begin position="1"/>
        <end position="138"/>
    </location>
</feature>
<organism>
    <name type="scientific">Geobacillus sp. (strain WCH70)</name>
    <dbReference type="NCBI Taxonomy" id="471223"/>
    <lineage>
        <taxon>Bacteria</taxon>
        <taxon>Bacillati</taxon>
        <taxon>Bacillota</taxon>
        <taxon>Bacilli</taxon>
        <taxon>Bacillales</taxon>
        <taxon>Anoxybacillaceae</taxon>
        <taxon>Geobacillus</taxon>
    </lineage>
</organism>
<accession>C5D4Z1</accession>
<dbReference type="EC" id="3.1.-.-" evidence="1"/>
<dbReference type="EMBL" id="CP001638">
    <property type="protein sequence ID" value="ACS25183.1"/>
    <property type="molecule type" value="Genomic_DNA"/>
</dbReference>
<dbReference type="SMR" id="C5D4Z1"/>
<dbReference type="STRING" id="471223.GWCH70_2488"/>
<dbReference type="KEGG" id="gwc:GWCH70_2488"/>
<dbReference type="eggNOG" id="COG0816">
    <property type="taxonomic scope" value="Bacteria"/>
</dbReference>
<dbReference type="HOGENOM" id="CLU_098240_2_0_9"/>
<dbReference type="OrthoDB" id="9796140at2"/>
<dbReference type="GO" id="GO:0005829">
    <property type="term" value="C:cytosol"/>
    <property type="evidence" value="ECO:0007669"/>
    <property type="project" value="TreeGrafter"/>
</dbReference>
<dbReference type="GO" id="GO:0004518">
    <property type="term" value="F:nuclease activity"/>
    <property type="evidence" value="ECO:0007669"/>
    <property type="project" value="UniProtKB-KW"/>
</dbReference>
<dbReference type="GO" id="GO:0000967">
    <property type="term" value="P:rRNA 5'-end processing"/>
    <property type="evidence" value="ECO:0007669"/>
    <property type="project" value="UniProtKB-UniRule"/>
</dbReference>
<dbReference type="CDD" id="cd16964">
    <property type="entry name" value="YqgF"/>
    <property type="match status" value="1"/>
</dbReference>
<dbReference type="FunFam" id="3.30.420.140:FF:000003">
    <property type="entry name" value="Putative pre-16S rRNA nuclease"/>
    <property type="match status" value="1"/>
</dbReference>
<dbReference type="Gene3D" id="3.30.420.140">
    <property type="entry name" value="YqgF/RNase H-like domain"/>
    <property type="match status" value="1"/>
</dbReference>
<dbReference type="HAMAP" id="MF_00651">
    <property type="entry name" value="Nuclease_YqgF"/>
    <property type="match status" value="1"/>
</dbReference>
<dbReference type="InterPro" id="IPR012337">
    <property type="entry name" value="RNaseH-like_sf"/>
</dbReference>
<dbReference type="InterPro" id="IPR005227">
    <property type="entry name" value="YqgF"/>
</dbReference>
<dbReference type="InterPro" id="IPR006641">
    <property type="entry name" value="YqgF/RNaseH-like_dom"/>
</dbReference>
<dbReference type="InterPro" id="IPR037027">
    <property type="entry name" value="YqgF/RNaseH-like_dom_sf"/>
</dbReference>
<dbReference type="NCBIfam" id="TIGR00250">
    <property type="entry name" value="RNAse_H_YqgF"/>
    <property type="match status" value="1"/>
</dbReference>
<dbReference type="PANTHER" id="PTHR33317">
    <property type="entry name" value="POLYNUCLEOTIDYL TRANSFERASE, RIBONUCLEASE H-LIKE SUPERFAMILY PROTEIN"/>
    <property type="match status" value="1"/>
</dbReference>
<dbReference type="PANTHER" id="PTHR33317:SF4">
    <property type="entry name" value="POLYNUCLEOTIDYL TRANSFERASE, RIBONUCLEASE H-LIKE SUPERFAMILY PROTEIN"/>
    <property type="match status" value="1"/>
</dbReference>
<dbReference type="Pfam" id="PF03652">
    <property type="entry name" value="RuvX"/>
    <property type="match status" value="1"/>
</dbReference>
<dbReference type="SMART" id="SM00732">
    <property type="entry name" value="YqgFc"/>
    <property type="match status" value="1"/>
</dbReference>
<dbReference type="SUPFAM" id="SSF53098">
    <property type="entry name" value="Ribonuclease H-like"/>
    <property type="match status" value="1"/>
</dbReference>
<gene>
    <name type="ordered locus">GWCH70_2488</name>
</gene>
<keyword id="KW-0963">Cytoplasm</keyword>
<keyword id="KW-0378">Hydrolase</keyword>
<keyword id="KW-0540">Nuclease</keyword>
<keyword id="KW-0690">Ribosome biogenesis</keyword>
<evidence type="ECO:0000255" key="1">
    <source>
        <dbReference type="HAMAP-Rule" id="MF_00651"/>
    </source>
</evidence>
<comment type="function">
    <text evidence="1">Could be a nuclease involved in processing of the 5'-end of pre-16S rRNA.</text>
</comment>
<comment type="subcellular location">
    <subcellularLocation>
        <location evidence="1">Cytoplasm</location>
    </subcellularLocation>
</comment>
<comment type="similarity">
    <text evidence="1">Belongs to the YqgF nuclease family.</text>
</comment>